<gene>
    <name evidence="1" type="primary">thiC</name>
    <name type="ordered locus">CPR_0668</name>
</gene>
<proteinExistence type="inferred from homology"/>
<reference key="1">
    <citation type="journal article" date="2006" name="Genome Res.">
        <title>Skewed genomic variability in strains of the toxigenic bacterial pathogen, Clostridium perfringens.</title>
        <authorList>
            <person name="Myers G.S.A."/>
            <person name="Rasko D.A."/>
            <person name="Cheung J.K."/>
            <person name="Ravel J."/>
            <person name="Seshadri R."/>
            <person name="DeBoy R.T."/>
            <person name="Ren Q."/>
            <person name="Varga J."/>
            <person name="Awad M.M."/>
            <person name="Brinkac L.M."/>
            <person name="Daugherty S.C."/>
            <person name="Haft D.H."/>
            <person name="Dodson R.J."/>
            <person name="Madupu R."/>
            <person name="Nelson W.C."/>
            <person name="Rosovitz M.J."/>
            <person name="Sullivan S.A."/>
            <person name="Khouri H."/>
            <person name="Dimitrov G.I."/>
            <person name="Watkins K.L."/>
            <person name="Mulligan S."/>
            <person name="Benton J."/>
            <person name="Radune D."/>
            <person name="Fisher D.J."/>
            <person name="Atkins H.S."/>
            <person name="Hiscox T."/>
            <person name="Jost B.H."/>
            <person name="Billington S.J."/>
            <person name="Songer J.G."/>
            <person name="McClane B.A."/>
            <person name="Titball R.W."/>
            <person name="Rood J.I."/>
            <person name="Melville S.B."/>
            <person name="Paulsen I.T."/>
        </authorList>
    </citation>
    <scope>NUCLEOTIDE SEQUENCE [LARGE SCALE GENOMIC DNA]</scope>
    <source>
        <strain>SM101 / Type A</strain>
    </source>
</reference>
<sequence>MNYTTQMDAAKKGIITKEMQVVAEKEGINIETLMNLMAEGKIVIPANKNHKSISAEGVGQGLKTKINVNLGISKDCANIELELEKVKKAIDMNAESIMDLSNYGKTYDFRKRLVEVSTAMIGTVPMYDVVGFYDKELKDITVDEFFDVVEKHAKDGVDFVTIHAGLNRETIETFRRNKRLTNIVSRGGSLLFAWMELNNRENPFYEYFDRLLDICEKYDLTLSLGDACRPGSIADATDAVQIKELITLGELTKRAWERNVQVIIEGPGHMAMNEIEANVLLEKKLCHGAPFYVLGPIVTDIAPGYDHITSAIGGAMAASYGADFLCYVTPAEHLRLPNLEDVREGIVATKIAAHAADIAKGISGARDIDNKMSDARKRLDWDEMFSLAIDSEKAIRYRKESTPEHKDSCTMCGKMCSIRNMNKILEGKDINLLRED</sequence>
<keyword id="KW-0004">4Fe-4S</keyword>
<keyword id="KW-0408">Iron</keyword>
<keyword id="KW-0411">Iron-sulfur</keyword>
<keyword id="KW-0456">Lyase</keyword>
<keyword id="KW-0479">Metal-binding</keyword>
<keyword id="KW-0949">S-adenosyl-L-methionine</keyword>
<keyword id="KW-0784">Thiamine biosynthesis</keyword>
<keyword id="KW-0862">Zinc</keyword>
<name>THIC_CLOPS</name>
<organism>
    <name type="scientific">Clostridium perfringens (strain SM101 / Type A)</name>
    <dbReference type="NCBI Taxonomy" id="289380"/>
    <lineage>
        <taxon>Bacteria</taxon>
        <taxon>Bacillati</taxon>
        <taxon>Bacillota</taxon>
        <taxon>Clostridia</taxon>
        <taxon>Eubacteriales</taxon>
        <taxon>Clostridiaceae</taxon>
        <taxon>Clostridium</taxon>
    </lineage>
</organism>
<comment type="function">
    <text evidence="1">Catalyzes the synthesis of the hydroxymethylpyrimidine phosphate (HMP-P) moiety of thiamine from aminoimidazole ribotide (AIR) in a radical S-adenosyl-L-methionine (SAM)-dependent reaction.</text>
</comment>
<comment type="catalytic activity">
    <reaction evidence="1">
        <text>5-amino-1-(5-phospho-beta-D-ribosyl)imidazole + S-adenosyl-L-methionine = 4-amino-2-methyl-5-(phosphooxymethyl)pyrimidine + CO + 5'-deoxyadenosine + formate + L-methionine + 3 H(+)</text>
        <dbReference type="Rhea" id="RHEA:24840"/>
        <dbReference type="ChEBI" id="CHEBI:15378"/>
        <dbReference type="ChEBI" id="CHEBI:15740"/>
        <dbReference type="ChEBI" id="CHEBI:17245"/>
        <dbReference type="ChEBI" id="CHEBI:17319"/>
        <dbReference type="ChEBI" id="CHEBI:57844"/>
        <dbReference type="ChEBI" id="CHEBI:58354"/>
        <dbReference type="ChEBI" id="CHEBI:59789"/>
        <dbReference type="ChEBI" id="CHEBI:137981"/>
        <dbReference type="EC" id="4.1.99.17"/>
    </reaction>
</comment>
<comment type="cofactor">
    <cofactor evidence="1">
        <name>[4Fe-4S] cluster</name>
        <dbReference type="ChEBI" id="CHEBI:49883"/>
    </cofactor>
    <text evidence="1">Binds 1 [4Fe-4S] cluster per subunit. The cluster is coordinated with 3 cysteines and an exchangeable S-adenosyl-L-methionine.</text>
</comment>
<comment type="pathway">
    <text evidence="1">Cofactor biosynthesis; thiamine diphosphate biosynthesis.</text>
</comment>
<comment type="similarity">
    <text evidence="1">Belongs to the ThiC family.</text>
</comment>
<feature type="chain" id="PRO_1000004755" description="Phosphomethylpyrimidine synthase">
    <location>
        <begin position="1"/>
        <end position="436"/>
    </location>
</feature>
<feature type="binding site" evidence="1">
    <location>
        <position position="69"/>
    </location>
    <ligand>
        <name>substrate</name>
    </ligand>
</feature>
<feature type="binding site" evidence="1">
    <location>
        <position position="98"/>
    </location>
    <ligand>
        <name>substrate</name>
    </ligand>
</feature>
<feature type="binding site" evidence="1">
    <location>
        <position position="127"/>
    </location>
    <ligand>
        <name>substrate</name>
    </ligand>
</feature>
<feature type="binding site" evidence="1">
    <location>
        <position position="163"/>
    </location>
    <ligand>
        <name>substrate</name>
    </ligand>
</feature>
<feature type="binding site" evidence="1">
    <location>
        <begin position="185"/>
        <end position="187"/>
    </location>
    <ligand>
        <name>substrate</name>
    </ligand>
</feature>
<feature type="binding site" evidence="1">
    <location>
        <begin position="226"/>
        <end position="229"/>
    </location>
    <ligand>
        <name>substrate</name>
    </ligand>
</feature>
<feature type="binding site" evidence="1">
    <location>
        <position position="265"/>
    </location>
    <ligand>
        <name>substrate</name>
    </ligand>
</feature>
<feature type="binding site" evidence="1">
    <location>
        <position position="269"/>
    </location>
    <ligand>
        <name>Zn(2+)</name>
        <dbReference type="ChEBI" id="CHEBI:29105"/>
    </ligand>
</feature>
<feature type="binding site" evidence="1">
    <location>
        <position position="292"/>
    </location>
    <ligand>
        <name>substrate</name>
    </ligand>
</feature>
<feature type="binding site" evidence="1">
    <location>
        <position position="333"/>
    </location>
    <ligand>
        <name>Zn(2+)</name>
        <dbReference type="ChEBI" id="CHEBI:29105"/>
    </ligand>
</feature>
<feature type="binding site" evidence="1">
    <location>
        <position position="409"/>
    </location>
    <ligand>
        <name>[4Fe-4S] cluster</name>
        <dbReference type="ChEBI" id="CHEBI:49883"/>
        <note>4Fe-4S-S-AdoMet</note>
    </ligand>
</feature>
<feature type="binding site" evidence="1">
    <location>
        <position position="412"/>
    </location>
    <ligand>
        <name>[4Fe-4S] cluster</name>
        <dbReference type="ChEBI" id="CHEBI:49883"/>
        <note>4Fe-4S-S-AdoMet</note>
    </ligand>
</feature>
<feature type="binding site" evidence="1">
    <location>
        <position position="416"/>
    </location>
    <ligand>
        <name>[4Fe-4S] cluster</name>
        <dbReference type="ChEBI" id="CHEBI:49883"/>
        <note>4Fe-4S-S-AdoMet</note>
    </ligand>
</feature>
<dbReference type="EC" id="4.1.99.17" evidence="1"/>
<dbReference type="EMBL" id="CP000312">
    <property type="protein sequence ID" value="ABG87488.1"/>
    <property type="molecule type" value="Genomic_DNA"/>
</dbReference>
<dbReference type="RefSeq" id="WP_011591748.1">
    <property type="nucleotide sequence ID" value="NC_008262.1"/>
</dbReference>
<dbReference type="SMR" id="Q0SV55"/>
<dbReference type="KEGG" id="cpr:CPR_0668"/>
<dbReference type="UniPathway" id="UPA00060"/>
<dbReference type="Proteomes" id="UP000001824">
    <property type="component" value="Chromosome"/>
</dbReference>
<dbReference type="GO" id="GO:0005829">
    <property type="term" value="C:cytosol"/>
    <property type="evidence" value="ECO:0007669"/>
    <property type="project" value="TreeGrafter"/>
</dbReference>
<dbReference type="GO" id="GO:0051539">
    <property type="term" value="F:4 iron, 4 sulfur cluster binding"/>
    <property type="evidence" value="ECO:0007669"/>
    <property type="project" value="UniProtKB-KW"/>
</dbReference>
<dbReference type="GO" id="GO:0016830">
    <property type="term" value="F:carbon-carbon lyase activity"/>
    <property type="evidence" value="ECO:0007669"/>
    <property type="project" value="InterPro"/>
</dbReference>
<dbReference type="GO" id="GO:0008270">
    <property type="term" value="F:zinc ion binding"/>
    <property type="evidence" value="ECO:0007669"/>
    <property type="project" value="UniProtKB-UniRule"/>
</dbReference>
<dbReference type="GO" id="GO:0009228">
    <property type="term" value="P:thiamine biosynthetic process"/>
    <property type="evidence" value="ECO:0007669"/>
    <property type="project" value="UniProtKB-KW"/>
</dbReference>
<dbReference type="GO" id="GO:0009229">
    <property type="term" value="P:thiamine diphosphate biosynthetic process"/>
    <property type="evidence" value="ECO:0007669"/>
    <property type="project" value="UniProtKB-UniRule"/>
</dbReference>
<dbReference type="FunFam" id="3.20.20.540:FF:000001">
    <property type="entry name" value="Phosphomethylpyrimidine synthase"/>
    <property type="match status" value="1"/>
</dbReference>
<dbReference type="Gene3D" id="6.10.250.620">
    <property type="match status" value="1"/>
</dbReference>
<dbReference type="Gene3D" id="3.20.20.540">
    <property type="entry name" value="Radical SAM ThiC family, central domain"/>
    <property type="match status" value="1"/>
</dbReference>
<dbReference type="HAMAP" id="MF_00089">
    <property type="entry name" value="ThiC"/>
    <property type="match status" value="1"/>
</dbReference>
<dbReference type="InterPro" id="IPR037509">
    <property type="entry name" value="ThiC"/>
</dbReference>
<dbReference type="InterPro" id="IPR038521">
    <property type="entry name" value="ThiC/Bza_core_dom"/>
</dbReference>
<dbReference type="InterPro" id="IPR002817">
    <property type="entry name" value="ThiC/BzaA/B"/>
</dbReference>
<dbReference type="NCBIfam" id="NF009895">
    <property type="entry name" value="PRK13352.1"/>
    <property type="match status" value="1"/>
</dbReference>
<dbReference type="NCBIfam" id="TIGR00190">
    <property type="entry name" value="thiC"/>
    <property type="match status" value="1"/>
</dbReference>
<dbReference type="PANTHER" id="PTHR30557:SF1">
    <property type="entry name" value="PHOSPHOMETHYLPYRIMIDINE SYNTHASE, CHLOROPLASTIC"/>
    <property type="match status" value="1"/>
</dbReference>
<dbReference type="PANTHER" id="PTHR30557">
    <property type="entry name" value="THIAMINE BIOSYNTHESIS PROTEIN THIC"/>
    <property type="match status" value="1"/>
</dbReference>
<dbReference type="Pfam" id="PF01964">
    <property type="entry name" value="ThiC_Rad_SAM"/>
    <property type="match status" value="1"/>
</dbReference>
<dbReference type="SFLD" id="SFLDF00407">
    <property type="entry name" value="phosphomethylpyrimidine_syntha"/>
    <property type="match status" value="1"/>
</dbReference>
<dbReference type="SFLD" id="SFLDG01114">
    <property type="entry name" value="phosphomethylpyrimidine_syntha"/>
    <property type="match status" value="1"/>
</dbReference>
<dbReference type="SFLD" id="SFLDS00113">
    <property type="entry name" value="Radical_SAM_Phosphomethylpyrim"/>
    <property type="match status" value="1"/>
</dbReference>
<accession>Q0SV55</accession>
<evidence type="ECO:0000255" key="1">
    <source>
        <dbReference type="HAMAP-Rule" id="MF_00089"/>
    </source>
</evidence>
<protein>
    <recommendedName>
        <fullName evidence="1">Phosphomethylpyrimidine synthase</fullName>
        <ecNumber evidence="1">4.1.99.17</ecNumber>
    </recommendedName>
    <alternativeName>
        <fullName evidence="1">Hydroxymethylpyrimidine phosphate synthase</fullName>
        <shortName evidence="1">HMP-P synthase</shortName>
        <shortName evidence="1">HMP-phosphate synthase</shortName>
        <shortName evidence="1">HMPP synthase</shortName>
    </alternativeName>
    <alternativeName>
        <fullName evidence="1">Thiamine biosynthesis protein ThiC</fullName>
    </alternativeName>
</protein>